<feature type="chain" id="PRO_0000068968" description="5-hydroxytryptamine receptor 4">
    <location>
        <begin position="1"/>
        <end position="406"/>
    </location>
</feature>
<feature type="topological domain" description="Extracellular" evidence="2">
    <location>
        <begin position="1"/>
        <end position="19"/>
    </location>
</feature>
<feature type="transmembrane region" description="Helical; Name=1" evidence="2">
    <location>
        <begin position="20"/>
        <end position="44"/>
    </location>
</feature>
<feature type="topological domain" description="Cytoplasmic" evidence="2">
    <location>
        <begin position="45"/>
        <end position="54"/>
    </location>
</feature>
<feature type="transmembrane region" description="Helical; Name=2" evidence="2">
    <location>
        <begin position="55"/>
        <end position="78"/>
    </location>
</feature>
<feature type="topological domain" description="Extracellular" evidence="2">
    <location>
        <begin position="79"/>
        <end position="92"/>
    </location>
</feature>
<feature type="transmembrane region" description="Helical; Name=3" evidence="2">
    <location>
        <begin position="93"/>
        <end position="117"/>
    </location>
</feature>
<feature type="topological domain" description="Cytoplasmic" evidence="2">
    <location>
        <begin position="118"/>
        <end position="133"/>
    </location>
</feature>
<feature type="transmembrane region" description="Helical; Name=4" evidence="2">
    <location>
        <begin position="134"/>
        <end position="157"/>
    </location>
</feature>
<feature type="topological domain" description="Extracellular" evidence="2">
    <location>
        <begin position="158"/>
        <end position="188"/>
    </location>
</feature>
<feature type="transmembrane region" description="Helical; Name=5" evidence="2">
    <location>
        <begin position="189"/>
        <end position="212"/>
    </location>
</feature>
<feature type="topological domain" description="Cytoplasmic" evidence="2">
    <location>
        <begin position="213"/>
        <end position="257"/>
    </location>
</feature>
<feature type="transmembrane region" description="Helical; Name=6" evidence="2">
    <location>
        <begin position="258"/>
        <end position="283"/>
    </location>
</feature>
<feature type="topological domain" description="Extracellular" evidence="2">
    <location>
        <begin position="284"/>
        <end position="290"/>
    </location>
</feature>
<feature type="transmembrane region" description="Helical; Name=7" evidence="2">
    <location>
        <begin position="291"/>
        <end position="314"/>
    </location>
</feature>
<feature type="topological domain" description="Cytoplasmic" evidence="2">
    <location>
        <begin position="315"/>
        <end position="406"/>
    </location>
</feature>
<feature type="binding site" evidence="2">
    <location>
        <position position="100"/>
    </location>
    <ligand>
        <name>serotonin</name>
        <dbReference type="ChEBI" id="CHEBI:350546"/>
    </ligand>
</feature>
<feature type="binding site" evidence="2">
    <location>
        <position position="279"/>
    </location>
    <ligand>
        <name>serotonin</name>
        <dbReference type="ChEBI" id="CHEBI:350546"/>
    </ligand>
</feature>
<feature type="glycosylation site" description="N-linked (GlcNAc...) asparagine" evidence="3">
    <location>
        <position position="7"/>
    </location>
</feature>
<feature type="disulfide bond" evidence="4">
    <location>
        <begin position="93"/>
        <end position="184"/>
    </location>
</feature>
<feature type="splice variant" id="VSP_001855" description="In isoform 5-HT4(E)." evidence="7">
    <original>RDTVECGGQWESRCHLTATSPLVAAQPVIRRPQDNDLEDSCSLKRSQS</original>
    <variation>SFPLLFCNRPVPV</variation>
    <location>
        <begin position="359"/>
        <end position="406"/>
    </location>
</feature>
<feature type="splice variant" id="VSP_001854" description="In isoform 5-HT4S." evidence="7">
    <original>DTVECGGQWESRCHLTATSPLVAAQPVIRRPQDNDLEDSCSLKRSQS</original>
    <variation>YTVLHSGQHQELEKLPIHNDPESLESCF</variation>
    <location>
        <begin position="360"/>
        <end position="406"/>
    </location>
</feature>
<feature type="sequence conflict" description="In Ref. 3; CAA09599." evidence="7" ref="3">
    <original>NA</original>
    <variation>MP</variation>
    <location>
        <begin position="74"/>
        <end position="75"/>
    </location>
</feature>
<evidence type="ECO:0000250" key="1">
    <source>
        <dbReference type="UniProtKB" id="P97288"/>
    </source>
</evidence>
<evidence type="ECO:0000250" key="2">
    <source>
        <dbReference type="UniProtKB" id="Q13639"/>
    </source>
</evidence>
<evidence type="ECO:0000255" key="3"/>
<evidence type="ECO:0000255" key="4">
    <source>
        <dbReference type="PROSITE-ProRule" id="PRU00521"/>
    </source>
</evidence>
<evidence type="ECO:0000269" key="5">
    <source>
    </source>
</evidence>
<evidence type="ECO:0000269" key="6">
    <source>
    </source>
</evidence>
<evidence type="ECO:0000305" key="7"/>
<gene>
    <name type="primary">Htr4</name>
</gene>
<protein>
    <recommendedName>
        <fullName>5-hydroxytryptamine receptor 4</fullName>
        <shortName>5-HT-4</shortName>
        <shortName>5-HT4</shortName>
    </recommendedName>
    <alternativeName>
        <fullName>Serotonin receptor 4</fullName>
    </alternativeName>
</protein>
<keyword id="KW-0025">Alternative splicing</keyword>
<keyword id="KW-1003">Cell membrane</keyword>
<keyword id="KW-1015">Disulfide bond</keyword>
<keyword id="KW-0967">Endosome</keyword>
<keyword id="KW-0297">G-protein coupled receptor</keyword>
<keyword id="KW-0325">Glycoprotein</keyword>
<keyword id="KW-0472">Membrane</keyword>
<keyword id="KW-0675">Receptor</keyword>
<keyword id="KW-1185">Reference proteome</keyword>
<keyword id="KW-0807">Transducer</keyword>
<keyword id="KW-0812">Transmembrane</keyword>
<keyword id="KW-1133">Transmembrane helix</keyword>
<dbReference type="EMBL" id="U20907">
    <property type="protein sequence ID" value="AAC52233.1"/>
    <property type="molecule type" value="mRNA"/>
</dbReference>
<dbReference type="EMBL" id="U20906">
    <property type="protein sequence ID" value="AAC52232.1"/>
    <property type="molecule type" value="mRNA"/>
</dbReference>
<dbReference type="EMBL" id="Z48153">
    <property type="protein sequence ID" value="CAA88170.1"/>
    <property type="molecule type" value="mRNA"/>
</dbReference>
<dbReference type="EMBL" id="AJ011370">
    <property type="protein sequence ID" value="CAA09599.1"/>
    <property type="molecule type" value="mRNA"/>
</dbReference>
<dbReference type="PIR" id="S55549">
    <property type="entry name" value="S55549"/>
</dbReference>
<dbReference type="PIR" id="S55550">
    <property type="entry name" value="S55550"/>
</dbReference>
<dbReference type="RefSeq" id="NP_036985.1">
    <property type="nucleotide sequence ID" value="NM_012853.1"/>
</dbReference>
<dbReference type="SMR" id="Q62758"/>
<dbReference type="FunCoup" id="Q62758">
    <property type="interactions" value="657"/>
</dbReference>
<dbReference type="STRING" id="10116.ENSRNOP00000025892"/>
<dbReference type="BindingDB" id="Q62758"/>
<dbReference type="ChEMBL" id="CHEMBL4317"/>
<dbReference type="DrugCentral" id="Q62758"/>
<dbReference type="GuidetoPHARMACOLOGY" id="9"/>
<dbReference type="GlyCosmos" id="Q62758">
    <property type="glycosylation" value="1 site, No reported glycans"/>
</dbReference>
<dbReference type="GlyGen" id="Q62758">
    <property type="glycosylation" value="1 site"/>
</dbReference>
<dbReference type="PhosphoSitePlus" id="Q62758"/>
<dbReference type="PaxDb" id="10116-ENSRNOP00000025892"/>
<dbReference type="GeneID" id="25324"/>
<dbReference type="KEGG" id="rno:25324"/>
<dbReference type="UCSC" id="RGD:2850">
    <molecule id="Q62758-1"/>
    <property type="organism name" value="rat"/>
</dbReference>
<dbReference type="AGR" id="RGD:2850"/>
<dbReference type="CTD" id="3360"/>
<dbReference type="RGD" id="2850">
    <property type="gene designation" value="Htr4"/>
</dbReference>
<dbReference type="eggNOG" id="KOG3656">
    <property type="taxonomic scope" value="Eukaryota"/>
</dbReference>
<dbReference type="InParanoid" id="Q62758"/>
<dbReference type="OrthoDB" id="5859976at2759"/>
<dbReference type="PhylomeDB" id="Q62758"/>
<dbReference type="Reactome" id="R-RNO-390666">
    <property type="pathway name" value="Serotonin receptors"/>
</dbReference>
<dbReference type="PRO" id="PR:Q62758"/>
<dbReference type="Proteomes" id="UP000002494">
    <property type="component" value="Unplaced"/>
</dbReference>
<dbReference type="GO" id="GO:0005737">
    <property type="term" value="C:cytoplasm"/>
    <property type="evidence" value="ECO:0000266"/>
    <property type="project" value="RGD"/>
</dbReference>
<dbReference type="GO" id="GO:0030425">
    <property type="term" value="C:dendrite"/>
    <property type="evidence" value="ECO:0000318"/>
    <property type="project" value="GO_Central"/>
</dbReference>
<dbReference type="GO" id="GO:0010008">
    <property type="term" value="C:endosome membrane"/>
    <property type="evidence" value="ECO:0007669"/>
    <property type="project" value="UniProtKB-SubCell"/>
</dbReference>
<dbReference type="GO" id="GO:0098978">
    <property type="term" value="C:glutamatergic synapse"/>
    <property type="evidence" value="ECO:0000266"/>
    <property type="project" value="RGD"/>
</dbReference>
<dbReference type="GO" id="GO:0016020">
    <property type="term" value="C:membrane"/>
    <property type="evidence" value="ECO:0000266"/>
    <property type="project" value="RGD"/>
</dbReference>
<dbReference type="GO" id="GO:0005886">
    <property type="term" value="C:plasma membrane"/>
    <property type="evidence" value="ECO:0000250"/>
    <property type="project" value="UniProtKB"/>
</dbReference>
<dbReference type="GO" id="GO:0098794">
    <property type="term" value="C:postsynapse"/>
    <property type="evidence" value="ECO:0000266"/>
    <property type="project" value="RGD"/>
</dbReference>
<dbReference type="GO" id="GO:0004993">
    <property type="term" value="F:G protein-coupled serotonin receptor activity"/>
    <property type="evidence" value="ECO:0000315"/>
    <property type="project" value="RGD"/>
</dbReference>
<dbReference type="GO" id="GO:0030594">
    <property type="term" value="F:neurotransmitter receptor activity"/>
    <property type="evidence" value="ECO:0000318"/>
    <property type="project" value="GO_Central"/>
</dbReference>
<dbReference type="GO" id="GO:0051378">
    <property type="term" value="F:serotonin binding"/>
    <property type="evidence" value="ECO:0000318"/>
    <property type="project" value="GO_Central"/>
</dbReference>
<dbReference type="GO" id="GO:0099589">
    <property type="term" value="F:serotonin receptor activity"/>
    <property type="evidence" value="ECO:0000266"/>
    <property type="project" value="RGD"/>
</dbReference>
<dbReference type="GO" id="GO:0007189">
    <property type="term" value="P:adenylate cyclase-activating G protein-coupled receptor signaling pathway"/>
    <property type="evidence" value="ECO:0000315"/>
    <property type="project" value="RGD"/>
</dbReference>
<dbReference type="GO" id="GO:0007192">
    <property type="term" value="P:adenylate cyclase-activating serotonin receptor signaling pathway"/>
    <property type="evidence" value="ECO:0000250"/>
    <property type="project" value="UniProtKB"/>
</dbReference>
<dbReference type="GO" id="GO:0007198">
    <property type="term" value="P:adenylate cyclase-inhibiting serotonin receptor signaling pathway"/>
    <property type="evidence" value="ECO:0000318"/>
    <property type="project" value="GO_Central"/>
</dbReference>
<dbReference type="GO" id="GO:0007268">
    <property type="term" value="P:chemical synaptic transmission"/>
    <property type="evidence" value="ECO:0000318"/>
    <property type="project" value="GO_Central"/>
</dbReference>
<dbReference type="GO" id="GO:0050890">
    <property type="term" value="P:cognition"/>
    <property type="evidence" value="ECO:0000304"/>
    <property type="project" value="RGD"/>
</dbReference>
<dbReference type="GO" id="GO:0007186">
    <property type="term" value="P:G protein-coupled receptor signaling pathway"/>
    <property type="evidence" value="ECO:0000266"/>
    <property type="project" value="RGD"/>
</dbReference>
<dbReference type="GO" id="GO:0007187">
    <property type="term" value="P:G protein-coupled receptor signaling pathway, coupled to cyclic nucleotide second messenger"/>
    <property type="evidence" value="ECO:0000318"/>
    <property type="project" value="GO_Central"/>
</dbReference>
<dbReference type="GO" id="GO:0007214">
    <property type="term" value="P:gamma-aminobutyric acid signaling pathway"/>
    <property type="evidence" value="ECO:0000315"/>
    <property type="project" value="RGD"/>
</dbReference>
<dbReference type="GO" id="GO:0120056">
    <property type="term" value="P:large intestinal transit"/>
    <property type="evidence" value="ECO:0000266"/>
    <property type="project" value="RGD"/>
</dbReference>
<dbReference type="GO" id="GO:0030277">
    <property type="term" value="P:maintenance of gastrointestinal epithelium"/>
    <property type="evidence" value="ECO:0000266"/>
    <property type="project" value="RGD"/>
</dbReference>
<dbReference type="GO" id="GO:0070254">
    <property type="term" value="P:mucus secretion"/>
    <property type="evidence" value="ECO:0000266"/>
    <property type="project" value="RGD"/>
</dbReference>
<dbReference type="GO" id="GO:0032098">
    <property type="term" value="P:regulation of appetite"/>
    <property type="evidence" value="ECO:0007669"/>
    <property type="project" value="InterPro"/>
</dbReference>
<dbReference type="GO" id="GO:0150052">
    <property type="term" value="P:regulation of postsynapse assembly"/>
    <property type="evidence" value="ECO:0000266"/>
    <property type="project" value="RGD"/>
</dbReference>
<dbReference type="CDD" id="cd15056">
    <property type="entry name" value="7tmA_5-HT4"/>
    <property type="match status" value="1"/>
</dbReference>
<dbReference type="FunFam" id="1.20.1070.10:FF:000046">
    <property type="entry name" value="5-hydroxytryptamine receptor 4"/>
    <property type="match status" value="1"/>
</dbReference>
<dbReference type="Gene3D" id="1.20.1070.10">
    <property type="entry name" value="Rhodopsin 7-helix transmembrane proteins"/>
    <property type="match status" value="1"/>
</dbReference>
<dbReference type="InterPro" id="IPR001520">
    <property type="entry name" value="5HT4_rcpt"/>
</dbReference>
<dbReference type="InterPro" id="IPR000276">
    <property type="entry name" value="GPCR_Rhodpsn"/>
</dbReference>
<dbReference type="InterPro" id="IPR017452">
    <property type="entry name" value="GPCR_Rhodpsn_7TM"/>
</dbReference>
<dbReference type="PANTHER" id="PTHR24248">
    <property type="entry name" value="ADRENERGIC RECEPTOR-RELATED G-PROTEIN COUPLED RECEPTOR"/>
    <property type="match status" value="1"/>
</dbReference>
<dbReference type="PANTHER" id="PTHR24248:SF66">
    <property type="entry name" value="OCTOPAMINE RECEPTOR BETA-3R"/>
    <property type="match status" value="1"/>
</dbReference>
<dbReference type="Pfam" id="PF00001">
    <property type="entry name" value="7tm_1"/>
    <property type="match status" value="1"/>
</dbReference>
<dbReference type="PRINTS" id="PR01059">
    <property type="entry name" value="5HT4RECEPTR"/>
</dbReference>
<dbReference type="PRINTS" id="PR00237">
    <property type="entry name" value="GPCRRHODOPSN"/>
</dbReference>
<dbReference type="SMART" id="SM01381">
    <property type="entry name" value="7TM_GPCR_Srsx"/>
    <property type="match status" value="1"/>
</dbReference>
<dbReference type="SUPFAM" id="SSF81321">
    <property type="entry name" value="Family A G protein-coupled receptor-like"/>
    <property type="match status" value="1"/>
</dbReference>
<dbReference type="PROSITE" id="PS00237">
    <property type="entry name" value="G_PROTEIN_RECEP_F1_1"/>
    <property type="match status" value="1"/>
</dbReference>
<dbReference type="PROSITE" id="PS50262">
    <property type="entry name" value="G_PROTEIN_RECEP_F1_2"/>
    <property type="match status" value="1"/>
</dbReference>
<name>5HT4R_RAT</name>
<reference key="1">
    <citation type="journal article" date="1995" name="EMBO J.">
        <title>The 5-HT4 receptor: molecular cloning and pharmacological characterization of two splice variants.</title>
        <authorList>
            <person name="Gerald C."/>
            <person name="Adham N."/>
            <person name="Kao H.T."/>
            <person name="Olsen M.A."/>
            <person name="Laz T.M."/>
            <person name="Schechter L.E."/>
            <person name="Bard J.A."/>
            <person name="Vaysse P."/>
            <person name="Hartig P.R."/>
            <person name="Branchek T.A."/>
            <person name="Weinshank R.L."/>
        </authorList>
    </citation>
    <scope>NUCLEOTIDE SEQUENCE [MRNA]</scope>
    <scope>FUNCTION</scope>
    <scope>TISSUE SPECIFICITY</scope>
    <source>
        <tissue>Brain</tissue>
    </source>
</reference>
<reference key="2">
    <citation type="journal article" date="1995" name="FEBS Lett.">
        <title>Expression of serotonin receptor mRNAs in blood vessels.</title>
        <authorList>
            <person name="Ullmer C."/>
            <person name="Schmuck K."/>
            <person name="Kalkman H.O."/>
            <person name="Luebbert H."/>
        </authorList>
    </citation>
    <scope>NUCLEOTIDE SEQUENCE [MRNA] OF 165-259</scope>
    <source>
        <tissue>Brain</tissue>
    </source>
</reference>
<reference key="3">
    <citation type="journal article" date="1999" name="Mol. Pharmacol.">
        <title>Novel brain-specific 5-HT4 receptor splice variants show marked constitutive activity: role of the C-terminal intracellular domain.</title>
        <authorList>
            <person name="Claeysen S."/>
            <person name="Sebben M."/>
            <person name="Becamel C."/>
            <person name="Bockaert J."/>
            <person name="Dumuis A."/>
        </authorList>
    </citation>
    <scope>NUCLEOTIDE SEQUENCE [MRNA] (ISOFORM 5-HT4(E))</scope>
    <scope>FUNCTION</scope>
    <source>
        <tissue>Brain</tissue>
    </source>
</reference>
<proteinExistence type="evidence at transcript level"/>
<accession>Q62758</accession>
<accession>O89034</accession>
<accession>Q62757</accession>
<accession>Q63006</accession>
<comment type="function">
    <text evidence="2 5 6">G-protein coupled receptor for 5-hydroxytryptamine (serotonin), a biogenic hormone that functions as a neurotransmitter, a hormone and a mitogen (PubMed:10220570, PubMed:7796807). Ligand binding causes a conformation change that triggers signaling via guanine nucleotide-binding proteins (G proteins) and modulates the activity of downstream effectors (By similarity). HTR4 is coupled to G(s) G alpha proteins and mediates activation of adenylate cyclase activity (By similarity).</text>
</comment>
<comment type="subunit">
    <text evidence="2">Interacts (via C-terminus 330-346 AA) with GRK5; this interaction is promoted by 5-HT (serotonin).</text>
</comment>
<comment type="subcellular location">
    <subcellularLocation>
        <location evidence="2">Cell membrane</location>
        <topology evidence="3">Multi-pass membrane protein</topology>
    </subcellularLocation>
    <subcellularLocation>
        <location evidence="1">Endosome membrane</location>
        <topology evidence="3">Multi-pass membrane protein</topology>
    </subcellularLocation>
    <text evidence="1">Interaction with SNX27 mediates recruitment to early endosomes, while interaction with NHERF1 and EZR might target the protein to specialized subcellular regions, such as microvilli.</text>
</comment>
<comment type="alternative products">
    <event type="alternative splicing"/>
    <isoform>
        <id>Q62758-1</id>
        <name>5-HT4L</name>
        <sequence type="displayed"/>
    </isoform>
    <isoform>
        <id>Q62758-2</id>
        <name>5-HT4S</name>
        <sequence type="described" ref="VSP_001854"/>
    </isoform>
    <isoform>
        <id>Q62758-3</id>
        <name>5-HT4(E)</name>
        <sequence type="described" ref="VSP_001855"/>
    </isoform>
    <text>Additional isoforms seem to exist.</text>
</comment>
<comment type="tissue specificity">
    <molecule>Isoform 5-HT4S</molecule>
    <text evidence="6">In brain, isoform 5-HT4S is restricted to the striatum (PubMed:7796807). In peripheral tissues, differential expression is also observed in the atrium of the heart where only isoform 5-HT4S is detectable (PubMed:7796807).</text>
</comment>
<comment type="tissue specificity">
    <molecule>Isoform 5-HT4L</molecule>
    <text evidence="6">In brain, isoform 5-HT4L is expressed throughout the brain, except in the cerebellum.</text>
</comment>
<comment type="domain">
    <text evidence="2">Specificity for G(s) G alpha proteins is determined by the length of transmembrane regions 5 and 6 (TM5 and TM6).</text>
</comment>
<comment type="similarity">
    <text evidence="4">Belongs to the G-protein coupled receptor 1 family.</text>
</comment>
<sequence>MDRLDANVSSNEGFGSVEKVVLLTFFAMVILMAILGNLLVMVAVCRDRQLRKIKTNYFIVSLAFADLLVSVLVNAFGAIELVQDIWFYGEMFCLVRTSLDVLLTTASIFHLCCISLDRYYAICCQPLVYRNKMTPLRIALMLGGCWVIPMFISFLPIMQGWNNIGIVDVIEKRKFNHNSNSTFCVFMVNKPYAITCSVVAFYIPFLLMVLAYYRIYVTAKEHAQQIQMLQRAGATSESRPQTADQHSTHRMRTETKAAKTLCVIMGCFCFCWAPFFVTNIVDPFIDYTVPEKVWTAFLWLGYINSGLNPFLYAFLNKSFRRAFLIILCCDDERYKRPPILGQTVPCSTTTINGSTHVLRDTVECGGQWESRCHLTATSPLVAAQPVIRRPQDNDLEDSCSLKRSQS</sequence>
<organism>
    <name type="scientific">Rattus norvegicus</name>
    <name type="common">Rat</name>
    <dbReference type="NCBI Taxonomy" id="10116"/>
    <lineage>
        <taxon>Eukaryota</taxon>
        <taxon>Metazoa</taxon>
        <taxon>Chordata</taxon>
        <taxon>Craniata</taxon>
        <taxon>Vertebrata</taxon>
        <taxon>Euteleostomi</taxon>
        <taxon>Mammalia</taxon>
        <taxon>Eutheria</taxon>
        <taxon>Euarchontoglires</taxon>
        <taxon>Glires</taxon>
        <taxon>Rodentia</taxon>
        <taxon>Myomorpha</taxon>
        <taxon>Muroidea</taxon>
        <taxon>Muridae</taxon>
        <taxon>Murinae</taxon>
        <taxon>Rattus</taxon>
    </lineage>
</organism>